<keyword id="KW-1185">Reference proteome</keyword>
<accession>Q4R767</accession>
<gene>
    <name type="primary">FNDC8</name>
    <name type="ORF">QtsA-16123</name>
</gene>
<proteinExistence type="evidence at transcript level"/>
<name>FNDC8_MACFA</name>
<sequence>MASEALHQVGDGEEAVLKKENFNMMNALDQLPKPFPNPKSMNRTVTTKGLPLSSKGNLVNFLEDDTINLPKPMPVDDSDCSSDDTSISAFSSTLLNPIKLAVTQPNSSFFAGMLEGELNKLSFSPMAKNTEKEDLALGPCPCPSKCQMATRGLLDLDNPELETETSSTHSESSVVVDLPDTPFIFEHTVSNSTAVISWTYALGKQPVSFYQVLLQEAAETQENELPKAKNRPWIFNKILGTTVKLMELKPNTCYCLTVRAANTAGVGKWCKPYKFATLATDFSSFPENNPIQITVRRKEPQRKIVSIGLEEMRRLEDLEYLFPY</sequence>
<evidence type="ECO:0000255" key="1">
    <source>
        <dbReference type="PROSITE-ProRule" id="PRU00316"/>
    </source>
</evidence>
<feature type="chain" id="PRO_0000284531" description="Fibronectin type III domain-containing protein 8">
    <location>
        <begin position="1"/>
        <end position="324"/>
    </location>
</feature>
<feature type="domain" description="Fibronectin type-III" evidence="1">
    <location>
        <begin position="179"/>
        <end position="280"/>
    </location>
</feature>
<reference key="1">
    <citation type="submission" date="2005-06" db="EMBL/GenBank/DDBJ databases">
        <title>DNA sequences of macaque genes expressed in brain or testis and its evolutionary implications.</title>
        <authorList>
            <consortium name="International consortium for macaque cDNA sequencing and analysis"/>
        </authorList>
    </citation>
    <scope>NUCLEOTIDE SEQUENCE [LARGE SCALE MRNA]</scope>
    <source>
        <tissue>Testis</tissue>
    </source>
</reference>
<protein>
    <recommendedName>
        <fullName>Fibronectin type III domain-containing protein 8</fullName>
    </recommendedName>
</protein>
<dbReference type="EMBL" id="AB168957">
    <property type="protein sequence ID" value="BAE01056.1"/>
    <property type="molecule type" value="mRNA"/>
</dbReference>
<dbReference type="RefSeq" id="NP_001270863.1">
    <property type="nucleotide sequence ID" value="NM_001283934.1"/>
</dbReference>
<dbReference type="RefSeq" id="XP_045231087.1">
    <property type="nucleotide sequence ID" value="XM_045375152.2"/>
</dbReference>
<dbReference type="STRING" id="9541.ENSMFAP00000045148"/>
<dbReference type="Ensembl" id="ENSMFAT00000019449.2">
    <property type="protein sequence ID" value="ENSMFAP00000045148.1"/>
    <property type="gene ID" value="ENSMFAG00000000308.2"/>
</dbReference>
<dbReference type="GeneID" id="101926001"/>
<dbReference type="VEuPathDB" id="HostDB:ENSMFAG00000000308"/>
<dbReference type="eggNOG" id="ENOG502STU7">
    <property type="taxonomic scope" value="Eukaryota"/>
</dbReference>
<dbReference type="GeneTree" id="ENSGT00390000006458"/>
<dbReference type="OMA" id="TYAVGKQ"/>
<dbReference type="Proteomes" id="UP000233100">
    <property type="component" value="Chromosome 16"/>
</dbReference>
<dbReference type="Bgee" id="ENSMFAG00000000308">
    <property type="expression patterns" value="Expressed in multicellular organism"/>
</dbReference>
<dbReference type="GO" id="GO:0005634">
    <property type="term" value="C:nucleus"/>
    <property type="evidence" value="ECO:0007669"/>
    <property type="project" value="TreeGrafter"/>
</dbReference>
<dbReference type="CDD" id="cd00063">
    <property type="entry name" value="FN3"/>
    <property type="match status" value="1"/>
</dbReference>
<dbReference type="FunFam" id="2.60.40.10:FF:002100">
    <property type="entry name" value="Fibronectin type III domain containing 8"/>
    <property type="match status" value="1"/>
</dbReference>
<dbReference type="Gene3D" id="2.60.40.10">
    <property type="entry name" value="Immunoglobulins"/>
    <property type="match status" value="1"/>
</dbReference>
<dbReference type="InterPro" id="IPR003961">
    <property type="entry name" value="FN3_dom"/>
</dbReference>
<dbReference type="InterPro" id="IPR036116">
    <property type="entry name" value="FN3_sf"/>
</dbReference>
<dbReference type="InterPro" id="IPR013783">
    <property type="entry name" value="Ig-like_fold"/>
</dbReference>
<dbReference type="PANTHER" id="PTHR32430">
    <property type="entry name" value="FIBRONECTIN TYPE III DOMAIN-CONTAINING PROTEIN 8"/>
    <property type="match status" value="1"/>
</dbReference>
<dbReference type="PANTHER" id="PTHR32430:SF1">
    <property type="entry name" value="FIBRONECTIN TYPE III DOMAIN-CONTAINING PROTEIN 8"/>
    <property type="match status" value="1"/>
</dbReference>
<dbReference type="Pfam" id="PF00041">
    <property type="entry name" value="fn3"/>
    <property type="match status" value="1"/>
</dbReference>
<dbReference type="SMART" id="SM00060">
    <property type="entry name" value="FN3"/>
    <property type="match status" value="1"/>
</dbReference>
<dbReference type="SUPFAM" id="SSF49265">
    <property type="entry name" value="Fibronectin type III"/>
    <property type="match status" value="1"/>
</dbReference>
<dbReference type="PROSITE" id="PS50853">
    <property type="entry name" value="FN3"/>
    <property type="match status" value="1"/>
</dbReference>
<organism>
    <name type="scientific">Macaca fascicularis</name>
    <name type="common">Crab-eating macaque</name>
    <name type="synonym">Cynomolgus monkey</name>
    <dbReference type="NCBI Taxonomy" id="9541"/>
    <lineage>
        <taxon>Eukaryota</taxon>
        <taxon>Metazoa</taxon>
        <taxon>Chordata</taxon>
        <taxon>Craniata</taxon>
        <taxon>Vertebrata</taxon>
        <taxon>Euteleostomi</taxon>
        <taxon>Mammalia</taxon>
        <taxon>Eutheria</taxon>
        <taxon>Euarchontoglires</taxon>
        <taxon>Primates</taxon>
        <taxon>Haplorrhini</taxon>
        <taxon>Catarrhini</taxon>
        <taxon>Cercopithecidae</taxon>
        <taxon>Cercopithecinae</taxon>
        <taxon>Macaca</taxon>
    </lineage>
</organism>